<sequence length="769" mass="83232">MVRTKNQSSSSSASSSTKSPVKISGGGGGGGGSSSSTNRSRSCSEALIDDGKSSSKLSSNRQRTTTTITTTTTTPGSSPDDDTTDADLTPTSGNVPRGGQSVHKQNLYVVSFPIIFLFNVLRSLIYQLFCIFRYLYGASTKVIYRSPHRRDCNIEIVVQNSKEQQAIICPLEGSGVNIEQAQILPQRQRALQTLEMAASRGGTGAGGYSPGPGDPLLAKQKHHHRRAFEYISKALKIDEENEGHKELAIELYRKGIKELEDGIAVDCWSGRGDVWDRAQRLHEKMQTNLSMARDRLHFLALREEDLQMQRLSLKEQPKKQLPHKFKQPMLVGQTTTSSGSSSSSRASAEPPKITLRSSGYGPKTGGATTSKAVPAASGRKLTIGNKRPGNLAVANKSQTLPRNLGSKTTSTSVGAALQRQPGKTAATPPAVRRQFSSGRNTPPQRSRTPINNNAASGSGSGASTPLISVKGVEQKLVQLILDEIVEGGAKVEWSDIAGQDVAKQALQEMVILPSVRPELFTGLRAPAKGLLLFGPPGNGKTLLARAVATECSATFLNISAASLTSKYVGDGEKLVRALFAVARHMQPSIIFIDEVDSLLSERSSNEHEASRRLKTEFLVEFDGLPGNPEGDRIVVLAATNRPQELDEAALRRFTKRVYVSLPGVQTRELLLSRLLQKQGSPLDTEALARLAKITDGYSGSDLTALAKDAALEPIRELNVEQVKCLDISAMRPITEKDFHNSLKRIRRSVAPQSLNSYEKWSQDYGDITI</sequence>
<keyword id="KW-0067">ATP-binding</keyword>
<keyword id="KW-0131">Cell cycle</keyword>
<keyword id="KW-0132">Cell division</keyword>
<keyword id="KW-0158">Chromosome</keyword>
<keyword id="KW-0963">Cytoplasm</keyword>
<keyword id="KW-0206">Cytoskeleton</keyword>
<keyword id="KW-0217">Developmental protein</keyword>
<keyword id="KW-0221">Differentiation</keyword>
<keyword id="KW-0413">Isomerase</keyword>
<keyword id="KW-0551">Lipid droplet</keyword>
<keyword id="KW-0472">Membrane</keyword>
<keyword id="KW-0493">Microtubule</keyword>
<keyword id="KW-0498">Mitosis</keyword>
<keyword id="KW-0524">Neurogenesis</keyword>
<keyword id="KW-0547">Nucleotide-binding</keyword>
<keyword id="KW-1185">Reference proteome</keyword>
<dbReference type="EC" id="5.6.1.1" evidence="3"/>
<dbReference type="EMBL" id="CH940650">
    <property type="protein sequence ID" value="EDW68357.1"/>
    <property type="molecule type" value="Genomic_DNA"/>
</dbReference>
<dbReference type="RefSeq" id="XP_002054837.1">
    <property type="nucleotide sequence ID" value="XM_002054801.4"/>
</dbReference>
<dbReference type="SMR" id="B4M0H8"/>
<dbReference type="FunCoup" id="B4M0H8">
    <property type="interactions" value="1618"/>
</dbReference>
<dbReference type="STRING" id="7244.B4M0H8"/>
<dbReference type="EnsemblMetazoa" id="FBtr0240585">
    <property type="protein sequence ID" value="FBpp0239077"/>
    <property type="gene ID" value="FBgn0211737"/>
</dbReference>
<dbReference type="EnsemblMetazoa" id="XM_002054801.3">
    <property type="protein sequence ID" value="XP_002054837.1"/>
    <property type="gene ID" value="LOC6631192"/>
</dbReference>
<dbReference type="GeneID" id="6631192"/>
<dbReference type="KEGG" id="dvi:6631192"/>
<dbReference type="CTD" id="42846"/>
<dbReference type="eggNOG" id="KOG0740">
    <property type="taxonomic scope" value="Eukaryota"/>
</dbReference>
<dbReference type="HOGENOM" id="CLU_000688_21_5_1"/>
<dbReference type="InParanoid" id="B4M0H8"/>
<dbReference type="OMA" id="KSREPML"/>
<dbReference type="OrthoDB" id="10251136at2759"/>
<dbReference type="PhylomeDB" id="B4M0H8"/>
<dbReference type="Proteomes" id="UP000008792">
    <property type="component" value="Unassembled WGS sequence"/>
</dbReference>
<dbReference type="GO" id="GO:0005813">
    <property type="term" value="C:centrosome"/>
    <property type="evidence" value="ECO:0000250"/>
    <property type="project" value="UniProtKB"/>
</dbReference>
<dbReference type="GO" id="GO:0005694">
    <property type="term" value="C:chromosome"/>
    <property type="evidence" value="ECO:0007669"/>
    <property type="project" value="UniProtKB-SubCell"/>
</dbReference>
<dbReference type="GO" id="GO:0005811">
    <property type="term" value="C:lipid droplet"/>
    <property type="evidence" value="ECO:0007669"/>
    <property type="project" value="UniProtKB-SubCell"/>
</dbReference>
<dbReference type="GO" id="GO:0016020">
    <property type="term" value="C:membrane"/>
    <property type="evidence" value="ECO:0007669"/>
    <property type="project" value="UniProtKB-SubCell"/>
</dbReference>
<dbReference type="GO" id="GO:0005874">
    <property type="term" value="C:microtubule"/>
    <property type="evidence" value="ECO:0007669"/>
    <property type="project" value="UniProtKB-UniRule"/>
</dbReference>
<dbReference type="GO" id="GO:0031594">
    <property type="term" value="C:neuromuscular junction"/>
    <property type="evidence" value="ECO:0007669"/>
    <property type="project" value="EnsemblMetazoa"/>
</dbReference>
<dbReference type="GO" id="GO:0005819">
    <property type="term" value="C:spindle"/>
    <property type="evidence" value="ECO:0007669"/>
    <property type="project" value="UniProtKB-UniRule"/>
</dbReference>
<dbReference type="GO" id="GO:0008021">
    <property type="term" value="C:synaptic vesicle"/>
    <property type="evidence" value="ECO:0007669"/>
    <property type="project" value="EnsemblMetazoa"/>
</dbReference>
<dbReference type="GO" id="GO:0043195">
    <property type="term" value="C:terminal bouton"/>
    <property type="evidence" value="ECO:0007669"/>
    <property type="project" value="EnsemblMetazoa"/>
</dbReference>
<dbReference type="GO" id="GO:0005524">
    <property type="term" value="F:ATP binding"/>
    <property type="evidence" value="ECO:0007669"/>
    <property type="project" value="UniProtKB-UniRule"/>
</dbReference>
<dbReference type="GO" id="GO:0016887">
    <property type="term" value="F:ATP hydrolysis activity"/>
    <property type="evidence" value="ECO:0007669"/>
    <property type="project" value="InterPro"/>
</dbReference>
<dbReference type="GO" id="GO:0008017">
    <property type="term" value="F:microtubule binding"/>
    <property type="evidence" value="ECO:0000250"/>
    <property type="project" value="UniProtKB"/>
</dbReference>
<dbReference type="GO" id="GO:0008568">
    <property type="term" value="F:microtubule severing ATPase activity"/>
    <property type="evidence" value="ECO:0000250"/>
    <property type="project" value="UniProtKB"/>
</dbReference>
<dbReference type="GO" id="GO:0008344">
    <property type="term" value="P:adult locomotory behavior"/>
    <property type="evidence" value="ECO:0007669"/>
    <property type="project" value="UniProtKB-UniRule"/>
</dbReference>
<dbReference type="GO" id="GO:0051301">
    <property type="term" value="P:cell division"/>
    <property type="evidence" value="ECO:0007669"/>
    <property type="project" value="UniProtKB-KW"/>
</dbReference>
<dbReference type="GO" id="GO:0035099">
    <property type="term" value="P:hemocyte migration"/>
    <property type="evidence" value="ECO:0007669"/>
    <property type="project" value="EnsemblMetazoa"/>
</dbReference>
<dbReference type="GO" id="GO:0051013">
    <property type="term" value="P:microtubule severing"/>
    <property type="evidence" value="ECO:0000250"/>
    <property type="project" value="UniProtKB"/>
</dbReference>
<dbReference type="GO" id="GO:0007079">
    <property type="term" value="P:mitotic chromosome movement towards spindle pole"/>
    <property type="evidence" value="ECO:0007669"/>
    <property type="project" value="UniProtKB-UniRule"/>
</dbReference>
<dbReference type="GO" id="GO:0000022">
    <property type="term" value="P:mitotic spindle elongation"/>
    <property type="evidence" value="ECO:0007669"/>
    <property type="project" value="UniProtKB-UniRule"/>
</dbReference>
<dbReference type="GO" id="GO:0007026">
    <property type="term" value="P:negative regulation of microtubule depolymerization"/>
    <property type="evidence" value="ECO:0007669"/>
    <property type="project" value="EnsemblMetazoa"/>
</dbReference>
<dbReference type="GO" id="GO:1900074">
    <property type="term" value="P:negative regulation of neuromuscular synaptic transmission"/>
    <property type="evidence" value="ECO:0007669"/>
    <property type="project" value="EnsemblMetazoa"/>
</dbReference>
<dbReference type="GO" id="GO:0045886">
    <property type="term" value="P:negative regulation of synaptic assembly at neuromuscular junction"/>
    <property type="evidence" value="ECO:0007669"/>
    <property type="project" value="EnsemblMetazoa"/>
</dbReference>
<dbReference type="GO" id="GO:0007399">
    <property type="term" value="P:nervous system development"/>
    <property type="evidence" value="ECO:0007669"/>
    <property type="project" value="UniProtKB-KW"/>
</dbReference>
<dbReference type="GO" id="GO:0048691">
    <property type="term" value="P:positive regulation of axon extension involved in regeneration"/>
    <property type="evidence" value="ECO:0007669"/>
    <property type="project" value="EnsemblMetazoa"/>
</dbReference>
<dbReference type="GO" id="GO:0050775">
    <property type="term" value="P:positive regulation of dendrite morphogenesis"/>
    <property type="evidence" value="ECO:0007669"/>
    <property type="project" value="EnsemblMetazoa"/>
</dbReference>
<dbReference type="GO" id="GO:0045834">
    <property type="term" value="P:positive regulation of lipid metabolic process"/>
    <property type="evidence" value="ECO:0007669"/>
    <property type="project" value="EnsemblMetazoa"/>
</dbReference>
<dbReference type="GO" id="GO:0031117">
    <property type="term" value="P:positive regulation of microtubule depolymerization"/>
    <property type="evidence" value="ECO:0007669"/>
    <property type="project" value="UniProtKB-UniRule"/>
</dbReference>
<dbReference type="GO" id="GO:1900075">
    <property type="term" value="P:positive regulation of neuromuscular synaptic transmission"/>
    <property type="evidence" value="ECO:0007669"/>
    <property type="project" value="EnsemblMetazoa"/>
</dbReference>
<dbReference type="GO" id="GO:0045887">
    <property type="term" value="P:positive regulation of synaptic assembly at neuromuscular junction"/>
    <property type="evidence" value="ECO:0007669"/>
    <property type="project" value="EnsemblMetazoa"/>
</dbReference>
<dbReference type="GO" id="GO:0034214">
    <property type="term" value="P:protein hexamerization"/>
    <property type="evidence" value="ECO:0007669"/>
    <property type="project" value="UniProtKB-UniRule"/>
</dbReference>
<dbReference type="GO" id="GO:2000331">
    <property type="term" value="P:regulation of terminal button organization"/>
    <property type="evidence" value="ECO:0007669"/>
    <property type="project" value="EnsemblMetazoa"/>
</dbReference>
<dbReference type="CDD" id="cd02679">
    <property type="entry name" value="MIT_spastin"/>
    <property type="match status" value="1"/>
</dbReference>
<dbReference type="CDD" id="cd19524">
    <property type="entry name" value="RecA-like_spastin"/>
    <property type="match status" value="1"/>
</dbReference>
<dbReference type="FunFam" id="3.40.50.300:FF:000093">
    <property type="entry name" value="Fidgetin-like 1"/>
    <property type="match status" value="1"/>
</dbReference>
<dbReference type="FunFam" id="1.10.8.60:FF:000036">
    <property type="entry name" value="Spastin"/>
    <property type="match status" value="1"/>
</dbReference>
<dbReference type="FunFam" id="1.20.58.80:FF:000006">
    <property type="entry name" value="Spastin"/>
    <property type="match status" value="1"/>
</dbReference>
<dbReference type="Gene3D" id="1.10.8.60">
    <property type="match status" value="1"/>
</dbReference>
<dbReference type="Gene3D" id="3.40.50.300">
    <property type="entry name" value="P-loop containing nucleotide triphosphate hydrolases"/>
    <property type="match status" value="1"/>
</dbReference>
<dbReference type="Gene3D" id="1.20.58.80">
    <property type="entry name" value="Phosphotransferase system, lactose/cellobiose-type IIA subunit"/>
    <property type="match status" value="1"/>
</dbReference>
<dbReference type="HAMAP" id="MF_03021">
    <property type="entry name" value="Spastin"/>
    <property type="match status" value="1"/>
</dbReference>
<dbReference type="InterPro" id="IPR003593">
    <property type="entry name" value="AAA+_ATPase"/>
</dbReference>
<dbReference type="InterPro" id="IPR041569">
    <property type="entry name" value="AAA_lid_3"/>
</dbReference>
<dbReference type="InterPro" id="IPR003959">
    <property type="entry name" value="ATPase_AAA_core"/>
</dbReference>
<dbReference type="InterPro" id="IPR003960">
    <property type="entry name" value="ATPase_AAA_CS"/>
</dbReference>
<dbReference type="InterPro" id="IPR007330">
    <property type="entry name" value="MIT_dom"/>
</dbReference>
<dbReference type="InterPro" id="IPR036181">
    <property type="entry name" value="MIT_dom_sf"/>
</dbReference>
<dbReference type="InterPro" id="IPR050304">
    <property type="entry name" value="MT-severing_AAA_ATPase"/>
</dbReference>
<dbReference type="InterPro" id="IPR027417">
    <property type="entry name" value="P-loop_NTPase"/>
</dbReference>
<dbReference type="InterPro" id="IPR015415">
    <property type="entry name" value="Spast_Vps4_C"/>
</dbReference>
<dbReference type="InterPro" id="IPR017179">
    <property type="entry name" value="Spastin"/>
</dbReference>
<dbReference type="PANTHER" id="PTHR23074">
    <property type="entry name" value="AAA DOMAIN-CONTAINING"/>
    <property type="match status" value="1"/>
</dbReference>
<dbReference type="PANTHER" id="PTHR23074:SF86">
    <property type="entry name" value="SPASTIN"/>
    <property type="match status" value="1"/>
</dbReference>
<dbReference type="Pfam" id="PF00004">
    <property type="entry name" value="AAA"/>
    <property type="match status" value="1"/>
</dbReference>
<dbReference type="Pfam" id="PF17862">
    <property type="entry name" value="AAA_lid_3"/>
    <property type="match status" value="1"/>
</dbReference>
<dbReference type="Pfam" id="PF09336">
    <property type="entry name" value="Vps4_C"/>
    <property type="match status" value="1"/>
</dbReference>
<dbReference type="SMART" id="SM00382">
    <property type="entry name" value="AAA"/>
    <property type="match status" value="1"/>
</dbReference>
<dbReference type="SMART" id="SM00745">
    <property type="entry name" value="MIT"/>
    <property type="match status" value="1"/>
</dbReference>
<dbReference type="SUPFAM" id="SSF116846">
    <property type="entry name" value="MIT domain"/>
    <property type="match status" value="1"/>
</dbReference>
<dbReference type="SUPFAM" id="SSF52540">
    <property type="entry name" value="P-loop containing nucleoside triphosphate hydrolases"/>
    <property type="match status" value="1"/>
</dbReference>
<dbReference type="PROSITE" id="PS00674">
    <property type="entry name" value="AAA"/>
    <property type="match status" value="1"/>
</dbReference>
<organism>
    <name type="scientific">Drosophila virilis</name>
    <name type="common">Fruit fly</name>
    <dbReference type="NCBI Taxonomy" id="7244"/>
    <lineage>
        <taxon>Eukaryota</taxon>
        <taxon>Metazoa</taxon>
        <taxon>Ecdysozoa</taxon>
        <taxon>Arthropoda</taxon>
        <taxon>Hexapoda</taxon>
        <taxon>Insecta</taxon>
        <taxon>Pterygota</taxon>
        <taxon>Neoptera</taxon>
        <taxon>Endopterygota</taxon>
        <taxon>Diptera</taxon>
        <taxon>Brachycera</taxon>
        <taxon>Muscomorpha</taxon>
        <taxon>Ephydroidea</taxon>
        <taxon>Drosophilidae</taxon>
        <taxon>Drosophila</taxon>
    </lineage>
</organism>
<comment type="function">
    <text evidence="3">ATP-dependent microtubule severing protein. Stimulates microtubule minus-end depolymerization and poleward microtubule flux in the mitotic spindle. Regulates microtubule stability in the neuromuscular junction synapse. Involved in lipid metabolism by regulating the size and distribution of lipid droplets. Involved in axon regeneration by regulating microtubule severing.</text>
</comment>
<comment type="catalytic activity">
    <reaction evidence="3">
        <text>n ATP + n H2O + a microtubule = n ADP + n phosphate + (n+1) alpha/beta tubulin heterodimers.</text>
        <dbReference type="EC" id="5.6.1.1"/>
    </reaction>
</comment>
<comment type="subunit">
    <text evidence="3">Homohexamer. The homohexamer is stabilized by ATP-binding. The homohexamer may adopt a ring conformation through which microtubules pass prior to being severed. Interacts with microtubules. Interacts with atl; may be involved in microtubule dynamics.</text>
</comment>
<comment type="subcellular location">
    <subcellularLocation>
        <location evidence="3">Membrane</location>
        <topology evidence="3">Peripheral membrane protein</topology>
    </subcellularLocation>
    <subcellularLocation>
        <location evidence="3">Cytoplasm</location>
        <location evidence="3">Cytoskeleton</location>
        <location evidence="3">Microtubule organizing center</location>
        <location evidence="3">Centrosome</location>
    </subcellularLocation>
    <subcellularLocation>
        <location evidence="3">Cytoplasm</location>
        <location evidence="3">Cytoskeleton</location>
    </subcellularLocation>
    <subcellularLocation>
        <location evidence="3">Chromosome</location>
    </subcellularLocation>
    <subcellularLocation>
        <location evidence="3">Lipid droplet</location>
    </subcellularLocation>
    <text evidence="3">Forms an intramembrane hairpin-like structure in the membrane. Colocalizes with cellular microtubule arrays. Localizes to chromosomes from prometaphase/metaphase to anaphase, and this requires microtubules. Localizes to discrete punctate cytoplasmic foci which may correspond to secretory vesicles.</text>
</comment>
<comment type="similarity">
    <text evidence="3">Belongs to the AAA ATPase family. Spastin subfamily.</text>
</comment>
<feature type="chain" id="PRO_0000367150" description="Spastin">
    <location>
        <begin position="1"/>
        <end position="769"/>
    </location>
</feature>
<feature type="topological domain" description="Cytoplasmic" evidence="3">
    <location>
        <begin position="1"/>
        <end position="113"/>
    </location>
</feature>
<feature type="intramembrane region" description="Helical" evidence="3">
    <location>
        <begin position="114"/>
        <end position="134"/>
    </location>
</feature>
<feature type="topological domain" description="Cytoplasmic" evidence="3">
    <location>
        <begin position="135"/>
        <end position="769"/>
    </location>
</feature>
<feature type="domain" description="MIT" evidence="2">
    <location>
        <begin position="224"/>
        <end position="299"/>
    </location>
</feature>
<feature type="region of interest" description="Required for localization to punctate cytoplasmic foci" evidence="1">
    <location>
        <begin position="1"/>
        <end position="201"/>
    </location>
</feature>
<feature type="region of interest" description="Disordered" evidence="4">
    <location>
        <begin position="1"/>
        <end position="100"/>
    </location>
</feature>
<feature type="region of interest" description="Sufficient for interaction with microtubules and microtubule severing" evidence="1">
    <location>
        <begin position="199"/>
        <end position="769"/>
    </location>
</feature>
<feature type="region of interest" description="Disordered" evidence="4">
    <location>
        <begin position="314"/>
        <end position="462"/>
    </location>
</feature>
<feature type="region of interest" description="Required for interaction with microtubules" evidence="1">
    <location>
        <begin position="452"/>
        <end position="466"/>
    </location>
</feature>
<feature type="compositionally biased region" description="Low complexity" evidence="4">
    <location>
        <begin position="8"/>
        <end position="19"/>
    </location>
</feature>
<feature type="compositionally biased region" description="Gly residues" evidence="4">
    <location>
        <begin position="24"/>
        <end position="33"/>
    </location>
</feature>
<feature type="compositionally biased region" description="Polar residues" evidence="4">
    <location>
        <begin position="54"/>
        <end position="63"/>
    </location>
</feature>
<feature type="compositionally biased region" description="Low complexity" evidence="4">
    <location>
        <begin position="64"/>
        <end position="78"/>
    </location>
</feature>
<feature type="compositionally biased region" description="Low complexity" evidence="4">
    <location>
        <begin position="334"/>
        <end position="344"/>
    </location>
</feature>
<feature type="compositionally biased region" description="Polar residues" evidence="4">
    <location>
        <begin position="395"/>
        <end position="413"/>
    </location>
</feature>
<feature type="compositionally biased region" description="Polar residues" evidence="4">
    <location>
        <begin position="434"/>
        <end position="450"/>
    </location>
</feature>
<feature type="compositionally biased region" description="Low complexity" evidence="4">
    <location>
        <begin position="451"/>
        <end position="462"/>
    </location>
</feature>
<feature type="binding site" evidence="3">
    <location>
        <begin position="534"/>
        <end position="541"/>
    </location>
    <ligand>
        <name>ATP</name>
        <dbReference type="ChEBI" id="CHEBI:30616"/>
    </ligand>
</feature>
<name>SPAST_DROVI</name>
<evidence type="ECO:0000250" key="1">
    <source>
        <dbReference type="UniProtKB" id="Q8I0P1"/>
    </source>
</evidence>
<evidence type="ECO:0000255" key="2"/>
<evidence type="ECO:0000255" key="3">
    <source>
        <dbReference type="HAMAP-Rule" id="MF_03021"/>
    </source>
</evidence>
<evidence type="ECO:0000256" key="4">
    <source>
        <dbReference type="SAM" id="MobiDB-lite"/>
    </source>
</evidence>
<reference key="1">
    <citation type="journal article" date="2007" name="Nature">
        <title>Evolution of genes and genomes on the Drosophila phylogeny.</title>
        <authorList>
            <consortium name="Drosophila 12 genomes consortium"/>
        </authorList>
    </citation>
    <scope>NUCLEOTIDE SEQUENCE [LARGE SCALE GENOMIC DNA]</scope>
    <source>
        <strain>Tucson 15010-1051.87</strain>
    </source>
</reference>
<protein>
    <recommendedName>
        <fullName evidence="3">Spastin</fullName>
        <ecNumber evidence="3">5.6.1.1</ecNumber>
    </recommendedName>
</protein>
<proteinExistence type="inferred from homology"/>
<accession>B4M0H8</accession>
<gene>
    <name evidence="3" type="primary">spas</name>
    <name type="ORF">GJ24660</name>
</gene>